<dbReference type="EC" id="2.3.1.87" evidence="5"/>
<dbReference type="EMBL" id="U46661">
    <property type="protein sequence ID" value="AAD00061.2"/>
    <property type="molecule type" value="mRNA"/>
</dbReference>
<dbReference type="RefSeq" id="NP_001040592.1">
    <property type="nucleotide sequence ID" value="NM_001047127.1"/>
</dbReference>
<dbReference type="SMR" id="O97756"/>
<dbReference type="FunCoup" id="O97756">
    <property type="interactions" value="466"/>
</dbReference>
<dbReference type="STRING" id="9544.ENSMMUP00000024958"/>
<dbReference type="iPTMnet" id="O97756"/>
<dbReference type="PaxDb" id="9544-ENSMMUP00000034025"/>
<dbReference type="Ensembl" id="ENSMMUT00000086699.1">
    <property type="protein sequence ID" value="ENSMMUP00000064346.1"/>
    <property type="gene ID" value="ENSMMUG00000018970.4"/>
</dbReference>
<dbReference type="GeneID" id="706924"/>
<dbReference type="KEGG" id="mcc:706924"/>
<dbReference type="CTD" id="15"/>
<dbReference type="VEuPathDB" id="HostDB:ENSMMUG00000018970"/>
<dbReference type="VGNC" id="VGNC:69468">
    <property type="gene designation" value="AANAT"/>
</dbReference>
<dbReference type="eggNOG" id="KOG4144">
    <property type="taxonomic scope" value="Eukaryota"/>
</dbReference>
<dbReference type="GeneTree" id="ENSGT00390000015579"/>
<dbReference type="HOGENOM" id="CLU_061829_3_1_1"/>
<dbReference type="InParanoid" id="O97756"/>
<dbReference type="OMA" id="AFVEMQH"/>
<dbReference type="OrthoDB" id="30840at2759"/>
<dbReference type="TreeFam" id="TF331622"/>
<dbReference type="BRENDA" id="2.3.1.87">
    <property type="organism ID" value="3126"/>
</dbReference>
<dbReference type="UniPathway" id="UPA00837">
    <property type="reaction ID" value="UER00815"/>
</dbReference>
<dbReference type="Proteomes" id="UP000006718">
    <property type="component" value="Chromosome 16"/>
</dbReference>
<dbReference type="Bgee" id="ENSMMUG00000018970">
    <property type="expression patterns" value="Expressed in spermatid and 8 other cell types or tissues"/>
</dbReference>
<dbReference type="ExpressionAtlas" id="O97756">
    <property type="expression patterns" value="baseline"/>
</dbReference>
<dbReference type="GO" id="GO:0005737">
    <property type="term" value="C:cytoplasm"/>
    <property type="evidence" value="ECO:0000318"/>
    <property type="project" value="GO_Central"/>
</dbReference>
<dbReference type="GO" id="GO:0048471">
    <property type="term" value="C:perinuclear region of cytoplasm"/>
    <property type="evidence" value="ECO:0000250"/>
    <property type="project" value="UniProtKB"/>
</dbReference>
<dbReference type="GO" id="GO:0004059">
    <property type="term" value="F:aralkylamine N-acetyltransferase activity"/>
    <property type="evidence" value="ECO:0000250"/>
    <property type="project" value="UniProtKB"/>
</dbReference>
<dbReference type="GO" id="GO:0071320">
    <property type="term" value="P:cellular response to cAMP"/>
    <property type="evidence" value="ECO:0000250"/>
    <property type="project" value="UniProtKB"/>
</dbReference>
<dbReference type="GO" id="GO:0007623">
    <property type="term" value="P:circadian rhythm"/>
    <property type="evidence" value="ECO:0000250"/>
    <property type="project" value="UniProtKB"/>
</dbReference>
<dbReference type="GO" id="GO:0030187">
    <property type="term" value="P:melatonin biosynthetic process"/>
    <property type="evidence" value="ECO:0000250"/>
    <property type="project" value="UniProtKB"/>
</dbReference>
<dbReference type="GO" id="GO:0006474">
    <property type="term" value="P:N-terminal protein amino acid acetylation"/>
    <property type="evidence" value="ECO:0000250"/>
    <property type="project" value="UniProtKB"/>
</dbReference>
<dbReference type="GO" id="GO:0009416">
    <property type="term" value="P:response to light stimulus"/>
    <property type="evidence" value="ECO:0000318"/>
    <property type="project" value="GO_Central"/>
</dbReference>
<dbReference type="FunFam" id="3.40.630.30:FF:000021">
    <property type="entry name" value="Serotonin N-acetyltransferase"/>
    <property type="match status" value="1"/>
</dbReference>
<dbReference type="Gene3D" id="3.40.630.30">
    <property type="match status" value="1"/>
</dbReference>
<dbReference type="InterPro" id="IPR016181">
    <property type="entry name" value="Acyl_CoA_acyltransferase"/>
</dbReference>
<dbReference type="InterPro" id="IPR000182">
    <property type="entry name" value="GNAT_dom"/>
</dbReference>
<dbReference type="InterPro" id="IPR051635">
    <property type="entry name" value="SNAT-like"/>
</dbReference>
<dbReference type="PANTHER" id="PTHR10908">
    <property type="entry name" value="SEROTONIN N-ACETYLTRANSFERASE"/>
    <property type="match status" value="1"/>
</dbReference>
<dbReference type="PANTHER" id="PTHR10908:SF0">
    <property type="entry name" value="SEROTONIN N-ACETYLTRANSFERASE"/>
    <property type="match status" value="1"/>
</dbReference>
<dbReference type="Pfam" id="PF00583">
    <property type="entry name" value="Acetyltransf_1"/>
    <property type="match status" value="1"/>
</dbReference>
<dbReference type="SUPFAM" id="SSF55729">
    <property type="entry name" value="Acyl-CoA N-acyltransferases (Nat)"/>
    <property type="match status" value="1"/>
</dbReference>
<dbReference type="PROSITE" id="PS51186">
    <property type="entry name" value="GNAT"/>
    <property type="match status" value="1"/>
</dbReference>
<evidence type="ECO:0000250" key="1"/>
<evidence type="ECO:0000250" key="2">
    <source>
        <dbReference type="UniProtKB" id="Q16613"/>
    </source>
</evidence>
<evidence type="ECO:0000250" key="3">
    <source>
        <dbReference type="UniProtKB" id="Q29495"/>
    </source>
</evidence>
<evidence type="ECO:0000255" key="4">
    <source>
        <dbReference type="PROSITE-ProRule" id="PRU00532"/>
    </source>
</evidence>
<evidence type="ECO:0000269" key="5">
    <source>
    </source>
</evidence>
<evidence type="ECO:0000305" key="6"/>
<organism>
    <name type="scientific">Macaca mulatta</name>
    <name type="common">Rhesus macaque</name>
    <dbReference type="NCBI Taxonomy" id="9544"/>
    <lineage>
        <taxon>Eukaryota</taxon>
        <taxon>Metazoa</taxon>
        <taxon>Chordata</taxon>
        <taxon>Craniata</taxon>
        <taxon>Vertebrata</taxon>
        <taxon>Euteleostomi</taxon>
        <taxon>Mammalia</taxon>
        <taxon>Eutheria</taxon>
        <taxon>Euarchontoglires</taxon>
        <taxon>Primates</taxon>
        <taxon>Haplorrhini</taxon>
        <taxon>Catarrhini</taxon>
        <taxon>Cercopithecidae</taxon>
        <taxon>Cercopithecinae</taxon>
        <taxon>Macaca</taxon>
    </lineage>
</organism>
<sequence>MSTQSTHPPKPEAPRLPPAISSCQRRHTLPASEFRCLTPEDAVSAFEIEREAFISVLGVCPLYLDEIRHFLTLCPELSLGWFEEGCLVAFIIGSLWDKDRLMQESLTMHRPGGHIAHLHVLAVHCAFRQQGRGPILLWRYLHHLGSQPAVHRAALMCEDALVPFYERFGFHAMGPCAITVGSLSFTELHCSLQGHPFLRRNSGC</sequence>
<accession>O97756</accession>
<feature type="chain" id="PRO_0000074581" description="Serotonin N-acetyltransferase">
    <location>
        <begin position="1"/>
        <end position="204"/>
    </location>
</feature>
<feature type="domain" description="N-acetyltransferase" evidence="4">
    <location>
        <begin position="32"/>
        <end position="193"/>
    </location>
</feature>
<feature type="binding site" evidence="3">
    <location>
        <begin position="121"/>
        <end position="123"/>
    </location>
    <ligand>
        <name>acetyl-CoA</name>
        <dbReference type="ChEBI" id="CHEBI:57288"/>
    </ligand>
</feature>
<feature type="binding site" evidence="3">
    <location>
        <position position="121"/>
    </location>
    <ligand>
        <name>substrate</name>
    </ligand>
</feature>
<feature type="binding site" evidence="3">
    <location>
        <begin position="129"/>
        <end position="134"/>
    </location>
    <ligand>
        <name>acetyl-CoA</name>
        <dbReference type="ChEBI" id="CHEBI:57288"/>
    </ligand>
</feature>
<feature type="binding site" evidence="3">
    <location>
        <position position="156"/>
    </location>
    <ligand>
        <name>substrate</name>
    </ligand>
</feature>
<feature type="binding site" evidence="3">
    <location>
        <begin position="165"/>
        <end position="167"/>
    </location>
    <ligand>
        <name>acetyl-CoA</name>
        <dbReference type="ChEBI" id="CHEBI:57288"/>
    </ligand>
</feature>
<feature type="site" description="Important for the catalytic mechanism; involved in substrate deprotonation" evidence="3">
    <location>
        <position position="117"/>
    </location>
</feature>
<feature type="site" description="Important for the catalytic mechanism; involved in substrate deprotonation" evidence="3">
    <location>
        <position position="119"/>
    </location>
</feature>
<feature type="modified residue" description="Phosphothreonine; by PKA" evidence="5">
    <location>
        <position position="28"/>
    </location>
</feature>
<feature type="modified residue" description="Phosphoserine" evidence="3">
    <location>
        <position position="202"/>
    </location>
</feature>
<protein>
    <recommendedName>
        <fullName>Serotonin N-acetyltransferase</fullName>
        <shortName>Serotonin acetylase</shortName>
        <ecNumber evidence="5">2.3.1.87</ecNumber>
    </recommendedName>
    <alternativeName>
        <fullName>Aralkylamine N-acetyltransferase</fullName>
        <shortName>AA-NAT</shortName>
    </alternativeName>
</protein>
<comment type="function">
    <text evidence="5">Controls the night/day rhythm of melatonin production in the pineal gland. Catalyzes the N-acetylation of serotonin into N-acetylserotonin, the penultimate step in the synthesis of melatonin.</text>
</comment>
<comment type="catalytic activity">
    <reaction evidence="5">
        <text>a 2-arylethylamine + acetyl-CoA = an N-acetyl-2-arylethylamine + CoA + H(+)</text>
        <dbReference type="Rhea" id="RHEA:20497"/>
        <dbReference type="ChEBI" id="CHEBI:15378"/>
        <dbReference type="ChEBI" id="CHEBI:55469"/>
        <dbReference type="ChEBI" id="CHEBI:57287"/>
        <dbReference type="ChEBI" id="CHEBI:57288"/>
        <dbReference type="ChEBI" id="CHEBI:77827"/>
        <dbReference type="EC" id="2.3.1.87"/>
    </reaction>
</comment>
<comment type="pathway">
    <text>Aromatic compound metabolism; melatonin biosynthesis; melatonin from serotonin: step 1/2.</text>
</comment>
<comment type="subunit">
    <text evidence="1">Monomer (By similarity). Interacts with several 14-3-3 proteins, including YWHAB, YWHAE, YWHAG and YWHAZ, preferentially when phosphorylated at Thr-28 (By similarity). Phosphorylation on Ser-202 also allows binding to YWHAZ, but with lower affinity (By similarity). The interaction with YWHAZ considerably increases affinity for arylalkylamines and acetyl-CoA and protects the enzyme from dephosphorylation and proteasomal degradation. It may also prevent thiol-dependent inactivation (By similarity).</text>
</comment>
<comment type="subcellular location">
    <subcellularLocation>
        <location evidence="2">Cytoplasm</location>
    </subcellularLocation>
</comment>
<comment type="tissue specificity">
    <text evidence="5">Highly expressed in pineal gland and in the photoreceptor outer segments in the retina. Expressed at about 100-fold lower levels in the pituitary gland and testis. Not detected in other tissues.</text>
</comment>
<comment type="induction">
    <text evidence="5">Exhibits night/day variations with a 10-fold increased protein levels and activity at night in the pineal gland and a 5-fold increase in the retina. In both tissues, the mRNA levels remain constant.</text>
</comment>
<comment type="PTM">
    <text evidence="5">cAMP-dependent phosphorylation regulates AANAT activity by promoting interaction with 14-3-3 proteins. Phosphorylation levels exhibit night/day variations, with an increase during nighttime.</text>
</comment>
<comment type="similarity">
    <text evidence="6">Belongs to the acetyltransferase family. AANAT subfamily.</text>
</comment>
<reference key="1">
    <citation type="journal article" date="2002" name="J. Clin. Endocrinol. Metab.">
        <title>Melatonin synthesis enzymes in Macaca mulatta: focus on arylalkylamine N-acetyltransferase (EC 2.3.1.87).</title>
        <authorList>
            <person name="Coon S.L."/>
            <person name="Del Olmo E."/>
            <person name="Young W.S. III"/>
            <person name="Klein D.C."/>
        </authorList>
    </citation>
    <scope>NUCLEOTIDE SEQUENCE [MRNA]</scope>
    <scope>FUNCTION</scope>
    <scope>CATALYTIC ACTIVITY</scope>
    <scope>TISSUE SPECIFICITY</scope>
    <scope>INDUCTION</scope>
    <scope>PHOSPHORYLATION AT THR-28</scope>
    <source>
        <tissue>Pineal gland</tissue>
    </source>
</reference>
<keyword id="KW-0012">Acyltransferase</keyword>
<keyword id="KW-0090">Biological rhythms</keyword>
<keyword id="KW-0963">Cytoplasm</keyword>
<keyword id="KW-0471">Melatonin biosynthesis</keyword>
<keyword id="KW-0597">Phosphoprotein</keyword>
<keyword id="KW-1185">Reference proteome</keyword>
<keyword id="KW-0808">Transferase</keyword>
<gene>
    <name type="primary">AANAT</name>
    <name type="synonym">SNAT</name>
</gene>
<name>SNAT_MACMU</name>
<proteinExistence type="evidence at protein level"/>